<protein>
    <recommendedName>
        <fullName evidence="2">Small ribosomal subunit protein uS12cz/uS12cy</fullName>
    </recommendedName>
    <alternativeName>
        <fullName evidence="3">30S ribosomal protein S12, chloroplastic</fullName>
    </alternativeName>
</protein>
<dbReference type="EMBL" id="X05013">
    <property type="protein sequence ID" value="CAA28661.1"/>
    <property type="molecule type" value="Genomic_DNA"/>
</dbReference>
<dbReference type="EMBL" id="DQ317523">
    <property type="protein sequence ID" value="ABC25182.1"/>
    <property type="molecule type" value="Genomic_DNA"/>
</dbReference>
<dbReference type="EMBL" id="DQ317523">
    <property type="protein sequence ID" value="ABC25168.1"/>
    <property type="molecule type" value="Genomic_DNA"/>
</dbReference>
<dbReference type="PIR" id="A26574">
    <property type="entry name" value="A26574"/>
</dbReference>
<dbReference type="SMR" id="P07134"/>
<dbReference type="FunCoup" id="P07134">
    <property type="interactions" value="3171"/>
</dbReference>
<dbReference type="STRING" id="3847.P07134"/>
<dbReference type="PaxDb" id="3847-GLYMA09G06491.1"/>
<dbReference type="KEGG" id="gmx:3989256"/>
<dbReference type="KEGG" id="gmx:3989257"/>
<dbReference type="eggNOG" id="KOG1750">
    <property type="taxonomic scope" value="Eukaryota"/>
</dbReference>
<dbReference type="InParanoid" id="P07134"/>
<dbReference type="Proteomes" id="UP000008827">
    <property type="component" value="Chloroplast"/>
</dbReference>
<dbReference type="GO" id="GO:0009507">
    <property type="term" value="C:chloroplast"/>
    <property type="evidence" value="ECO:0007669"/>
    <property type="project" value="UniProtKB-SubCell"/>
</dbReference>
<dbReference type="GO" id="GO:0005840">
    <property type="term" value="C:ribosome"/>
    <property type="evidence" value="ECO:0000318"/>
    <property type="project" value="GO_Central"/>
</dbReference>
<dbReference type="GO" id="GO:0015935">
    <property type="term" value="C:small ribosomal subunit"/>
    <property type="evidence" value="ECO:0007669"/>
    <property type="project" value="InterPro"/>
</dbReference>
<dbReference type="GO" id="GO:0019843">
    <property type="term" value="F:rRNA binding"/>
    <property type="evidence" value="ECO:0007669"/>
    <property type="project" value="UniProtKB-UniRule"/>
</dbReference>
<dbReference type="GO" id="GO:0003735">
    <property type="term" value="F:structural constituent of ribosome"/>
    <property type="evidence" value="ECO:0000318"/>
    <property type="project" value="GO_Central"/>
</dbReference>
<dbReference type="GO" id="GO:0006412">
    <property type="term" value="P:translation"/>
    <property type="evidence" value="ECO:0000318"/>
    <property type="project" value="GO_Central"/>
</dbReference>
<dbReference type="CDD" id="cd03368">
    <property type="entry name" value="Ribosomal_S12"/>
    <property type="match status" value="1"/>
</dbReference>
<dbReference type="FunFam" id="2.40.50.140:FF:000008">
    <property type="entry name" value="30S ribosomal protein S12, chloroplastic"/>
    <property type="match status" value="1"/>
</dbReference>
<dbReference type="Gene3D" id="2.40.50.140">
    <property type="entry name" value="Nucleic acid-binding proteins"/>
    <property type="match status" value="1"/>
</dbReference>
<dbReference type="HAMAP" id="MF_00403_B">
    <property type="entry name" value="Ribosomal_uS12_B"/>
    <property type="match status" value="1"/>
</dbReference>
<dbReference type="InterPro" id="IPR012340">
    <property type="entry name" value="NA-bd_OB-fold"/>
</dbReference>
<dbReference type="InterPro" id="IPR006032">
    <property type="entry name" value="Ribosomal_uS12"/>
</dbReference>
<dbReference type="InterPro" id="IPR005679">
    <property type="entry name" value="Ribosomal_uS12_bac"/>
</dbReference>
<dbReference type="NCBIfam" id="TIGR00981">
    <property type="entry name" value="rpsL_bact"/>
    <property type="match status" value="1"/>
</dbReference>
<dbReference type="PANTHER" id="PTHR11652">
    <property type="entry name" value="30S RIBOSOMAL PROTEIN S12 FAMILY MEMBER"/>
    <property type="match status" value="1"/>
</dbReference>
<dbReference type="Pfam" id="PF00164">
    <property type="entry name" value="Ribosom_S12_S23"/>
    <property type="match status" value="1"/>
</dbReference>
<dbReference type="PIRSF" id="PIRSF002133">
    <property type="entry name" value="Ribosomal_S12/S23"/>
    <property type="match status" value="1"/>
</dbReference>
<dbReference type="PRINTS" id="PR01034">
    <property type="entry name" value="RIBOSOMALS12"/>
</dbReference>
<dbReference type="SUPFAM" id="SSF50249">
    <property type="entry name" value="Nucleic acid-binding proteins"/>
    <property type="match status" value="1"/>
</dbReference>
<dbReference type="PROSITE" id="PS00055">
    <property type="entry name" value="RIBOSOMAL_S12"/>
    <property type="match status" value="1"/>
</dbReference>
<comment type="function">
    <text evidence="1">With S4 and S5 plays an important role in translational accuracy. Located at the interface of the 30S and 50S subunits (By similarity).</text>
</comment>
<comment type="subunit">
    <text evidence="1">Part of the 30S ribosomal subunit.</text>
</comment>
<comment type="subcellular location">
    <subcellularLocation>
        <location>Plastid</location>
        <location>Chloroplast</location>
    </subcellularLocation>
</comment>
<comment type="miscellaneous">
    <text>Exons 2 and 3 are cis-spliced, while a trans-splicing reaction is required to link exons 1 and 2.</text>
</comment>
<comment type="similarity">
    <text evidence="3">Belongs to the universal ribosomal protein uS12 family.</text>
</comment>
<feature type="chain" id="PRO_0000146427" description="Small ribosomal subunit protein uS12cz/uS12cy">
    <location>
        <begin position="1"/>
        <end position="123"/>
    </location>
</feature>
<feature type="sequence conflict" description="In Ref. 1; CAA28661." evidence="3" ref="1">
    <original>K</original>
    <variation>Q</variation>
    <location>
        <position position="116"/>
    </location>
</feature>
<name>RR12_SOYBN</name>
<organism>
    <name type="scientific">Glycine max</name>
    <name type="common">Soybean</name>
    <name type="synonym">Glycine hispida</name>
    <dbReference type="NCBI Taxonomy" id="3847"/>
    <lineage>
        <taxon>Eukaryota</taxon>
        <taxon>Viridiplantae</taxon>
        <taxon>Streptophyta</taxon>
        <taxon>Embryophyta</taxon>
        <taxon>Tracheophyta</taxon>
        <taxon>Spermatophyta</taxon>
        <taxon>Magnoliopsida</taxon>
        <taxon>eudicotyledons</taxon>
        <taxon>Gunneridae</taxon>
        <taxon>Pentapetalae</taxon>
        <taxon>rosids</taxon>
        <taxon>fabids</taxon>
        <taxon>Fabales</taxon>
        <taxon>Fabaceae</taxon>
        <taxon>Papilionoideae</taxon>
        <taxon>50 kb inversion clade</taxon>
        <taxon>NPAAA clade</taxon>
        <taxon>indigoferoid/millettioid clade</taxon>
        <taxon>Phaseoleae</taxon>
        <taxon>Glycine</taxon>
        <taxon>Glycine subgen. Soja</taxon>
    </lineage>
</organism>
<proteinExistence type="inferred from homology"/>
<accession>P07134</accession>
<accession>Q2PMV4</accession>
<sequence>MPTMKQLIRNTRQPIRNVTKSPALRGCPQRRGTCTRVYTITPKKPNSALRKVARVRLTSGFEITAYIPGIGHNLQEHSVVLVRGGRVKDLPGVRYHIVRGTLDAVGVKDRQQGRSKYGAKKPK</sequence>
<gene>
    <name type="primary">rps12-A</name>
</gene>
<gene>
    <name type="primary">rps12-B</name>
</gene>
<reference key="1">
    <citation type="journal article" date="1987" name="Nucleic Acids Res.">
        <title>Complete sequence of 'divided' rps12 (r-protein S12) and rps7 (r-protein S7) gene in soybean chloroplast DNA.</title>
        <authorList>
            <person name="von Allmen J.-M."/>
            <person name="Stutz E."/>
        </authorList>
    </citation>
    <scope>NUCLEOTIDE SEQUENCE [GENOMIC DNA]</scope>
</reference>
<reference key="2">
    <citation type="journal article" date="2005" name="Plant Mol. Biol.">
        <title>Complete chloroplast genome sequence of Glycine max and comparative analyses with other legume genomes.</title>
        <authorList>
            <person name="Saski C."/>
            <person name="Lee S.-B."/>
            <person name="Daniell H."/>
            <person name="Wood T.C."/>
            <person name="Tomkins J."/>
            <person name="Kim H.-G."/>
            <person name="Jansen R.K."/>
        </authorList>
    </citation>
    <scope>NUCLEOTIDE SEQUENCE [LARGE SCALE GENOMIC DNA]</scope>
    <source>
        <strain>cv. PI 437654</strain>
    </source>
</reference>
<evidence type="ECO:0000250" key="1"/>
<evidence type="ECO:0000255" key="2">
    <source>
        <dbReference type="HAMAP-Rule" id="MF_00403"/>
    </source>
</evidence>
<evidence type="ECO:0000305" key="3"/>
<geneLocation type="chloroplast"/>
<keyword id="KW-0150">Chloroplast</keyword>
<keyword id="KW-0934">Plastid</keyword>
<keyword id="KW-1185">Reference proteome</keyword>
<keyword id="KW-0687">Ribonucleoprotein</keyword>
<keyword id="KW-0689">Ribosomal protein</keyword>
<keyword id="KW-0694">RNA-binding</keyword>
<keyword id="KW-0699">rRNA-binding</keyword>